<keyword id="KW-0150">Chloroplast</keyword>
<keyword id="KW-0472">Membrane</keyword>
<keyword id="KW-0602">Photosynthesis</keyword>
<keyword id="KW-0604">Photosystem II</keyword>
<keyword id="KW-0934">Plastid</keyword>
<keyword id="KW-0793">Thylakoid</keyword>
<keyword id="KW-0812">Transmembrane</keyword>
<keyword id="KW-1133">Transmembrane helix</keyword>
<accession>Q7YNH4</accession>
<feature type="chain" id="PRO_0000217895" description="Photosystem II reaction center protein T">
    <location>
        <begin position="1"/>
        <end position="35"/>
    </location>
</feature>
<feature type="transmembrane region" description="Helical" evidence="1">
    <location>
        <begin position="3"/>
        <end position="23"/>
    </location>
</feature>
<comment type="function">
    <text evidence="1">Found at the monomer-monomer interface of the photosystem II (PS II) dimer, plays a role in assembly and dimerization of PSII. PSII is a light-driven water plastoquinone oxidoreductase, using light energy to abstract electrons from H(2)O, generating a proton gradient subsequently used for ATP formation.</text>
</comment>
<comment type="subunit">
    <text evidence="1">PSII is composed of 1 copy each of membrane proteins PsbA, PsbB, PsbC, PsbD, PsbE, PsbF, PsbH, PsbI, PsbJ, PsbK, PsbL, PsbM, PsbT, PsbY, PsbZ, Psb30/Ycf12, at least 3 peripheral proteins of the oxygen-evolving complex and a large number of cofactors. It forms dimeric complexes.</text>
</comment>
<comment type="subcellular location">
    <subcellularLocation>
        <location evidence="1">Plastid</location>
        <location evidence="1">Chloroplast thylakoid membrane</location>
        <topology evidence="1">Single-pass membrane protein</topology>
    </subcellularLocation>
</comment>
<comment type="similarity">
    <text evidence="1">Belongs to the PsbT family.</text>
</comment>
<reference key="1">
    <citation type="journal article" date="2003" name="Plant Syst. Evol.">
        <title>An integrated molecular and morphological study of the subfamily Suaedoideae Ulbr. (Chenopodiaceae).</title>
        <authorList>
            <person name="Schuetze P."/>
            <person name="Freitag H."/>
            <person name="Weising K."/>
        </authorList>
    </citation>
    <scope>NUCLEOTIDE SEQUENCE [GENOMIC DNA]</scope>
</reference>
<protein>
    <recommendedName>
        <fullName evidence="1">Photosystem II reaction center protein T</fullName>
        <shortName evidence="1">PSII-T</shortName>
    </recommendedName>
</protein>
<gene>
    <name evidence="1" type="primary">psbT</name>
</gene>
<name>PSBT_ALLOC</name>
<sequence>MEALVYTFLLVSTLGIIFFAIFFREPPKIQTKKMK</sequence>
<dbReference type="EMBL" id="AY181937">
    <property type="protein sequence ID" value="AAO66169.1"/>
    <property type="molecule type" value="Genomic_DNA"/>
</dbReference>
<dbReference type="SMR" id="Q7YNH4"/>
<dbReference type="GO" id="GO:0009535">
    <property type="term" value="C:chloroplast thylakoid membrane"/>
    <property type="evidence" value="ECO:0007669"/>
    <property type="project" value="UniProtKB-SubCell"/>
</dbReference>
<dbReference type="GO" id="GO:0009539">
    <property type="term" value="C:photosystem II reaction center"/>
    <property type="evidence" value="ECO:0007669"/>
    <property type="project" value="InterPro"/>
</dbReference>
<dbReference type="GO" id="GO:0015979">
    <property type="term" value="P:photosynthesis"/>
    <property type="evidence" value="ECO:0007669"/>
    <property type="project" value="UniProtKB-UniRule"/>
</dbReference>
<dbReference type="HAMAP" id="MF_00808">
    <property type="entry name" value="PSII_PsbT"/>
    <property type="match status" value="1"/>
</dbReference>
<dbReference type="InterPro" id="IPR001743">
    <property type="entry name" value="PSII_PsbT"/>
</dbReference>
<dbReference type="InterPro" id="IPR037268">
    <property type="entry name" value="PSII_PsbT_sf"/>
</dbReference>
<dbReference type="PANTHER" id="PTHR36411">
    <property type="match status" value="1"/>
</dbReference>
<dbReference type="PANTHER" id="PTHR36411:SF2">
    <property type="entry name" value="PHOTOSYSTEM II REACTION CENTER PROTEIN T"/>
    <property type="match status" value="1"/>
</dbReference>
<dbReference type="Pfam" id="PF01405">
    <property type="entry name" value="PsbT"/>
    <property type="match status" value="1"/>
</dbReference>
<dbReference type="SUPFAM" id="SSF161029">
    <property type="entry name" value="Photosystem II reaction center protein T, PsbT"/>
    <property type="match status" value="1"/>
</dbReference>
<organism>
    <name type="scientific">Allenrolfea occidentalis</name>
    <name type="common">Iodine bush</name>
    <name type="synonym">Halostachys occidentalis</name>
    <dbReference type="NCBI Taxonomy" id="224139"/>
    <lineage>
        <taxon>Eukaryota</taxon>
        <taxon>Viridiplantae</taxon>
        <taxon>Streptophyta</taxon>
        <taxon>Embryophyta</taxon>
        <taxon>Tracheophyta</taxon>
        <taxon>Spermatophyta</taxon>
        <taxon>Magnoliopsida</taxon>
        <taxon>eudicotyledons</taxon>
        <taxon>Gunneridae</taxon>
        <taxon>Pentapetalae</taxon>
        <taxon>Caryophyllales</taxon>
        <taxon>Chenopodiaceae</taxon>
        <taxon>Salicornioideae</taxon>
        <taxon>Allenrolfea</taxon>
    </lineage>
</organism>
<geneLocation type="chloroplast"/>
<evidence type="ECO:0000255" key="1">
    <source>
        <dbReference type="HAMAP-Rule" id="MF_00808"/>
    </source>
</evidence>
<proteinExistence type="inferred from homology"/>